<name>YL404_MIMIV</name>
<evidence type="ECO:0000255" key="1"/>
<evidence type="ECO:0000305" key="2"/>
<reference key="1">
    <citation type="journal article" date="2004" name="Science">
        <title>The 1.2-megabase genome sequence of Mimivirus.</title>
        <authorList>
            <person name="Raoult D."/>
            <person name="Audic S."/>
            <person name="Robert C."/>
            <person name="Abergel C."/>
            <person name="Renesto P."/>
            <person name="Ogata H."/>
            <person name="La Scola B."/>
            <person name="Susan M."/>
            <person name="Claverie J.-M."/>
        </authorList>
    </citation>
    <scope>NUCLEOTIDE SEQUENCE [LARGE SCALE GENOMIC DNA]</scope>
    <source>
        <strain>Rowbotham-Bradford</strain>
    </source>
</reference>
<sequence length="263" mass="30058">MGLFHSIFSLPSTINDSIEKQIYMPPYIPRFYYESLNTNYSKIFTRTSSNGDDIPIVQIRPKNNPFPQKYIVFSHGNGCDVYSVFSYLTNLSDKLDVGIITYDYVGYGLSRDNIPTEQGCYDSIEVAVDFLLNDYGLDPKNIYLFGQSLGTGITIDYAHKNNWNSPIILVSPYKSICTVVVDSCIVRPIDKFCTLNKIYQIKCPVKIFHGENDNVINITHGKKIYDSLNDKSLEPVWIPNTGHNDILDKITIQQIREVIDYFD</sequence>
<organismHost>
    <name type="scientific">Acanthamoeba polyphaga</name>
    <name type="common">Amoeba</name>
    <dbReference type="NCBI Taxonomy" id="5757"/>
</organismHost>
<comment type="similarity">
    <text evidence="2">Belongs to the AB hydrolase superfamily.</text>
</comment>
<organism>
    <name type="scientific">Acanthamoeba polyphaga mimivirus</name>
    <name type="common">APMV</name>
    <dbReference type="NCBI Taxonomy" id="212035"/>
    <lineage>
        <taxon>Viruses</taxon>
        <taxon>Varidnaviria</taxon>
        <taxon>Bamfordvirae</taxon>
        <taxon>Nucleocytoviricota</taxon>
        <taxon>Megaviricetes</taxon>
        <taxon>Imitervirales</taxon>
        <taxon>Mimiviridae</taxon>
        <taxon>Megamimivirinae</taxon>
        <taxon>Mimivirus</taxon>
        <taxon>Mimivirus bradfordmassiliense</taxon>
    </lineage>
</organism>
<proteinExistence type="inferred from homology"/>
<accession>Q5UQK4</accession>
<keyword id="KW-0378">Hydrolase</keyword>
<keyword id="KW-0449">Lipoprotein</keyword>
<keyword id="KW-0519">Myristate</keyword>
<keyword id="KW-1185">Reference proteome</keyword>
<feature type="initiator methionine" description="Removed" evidence="1">
    <location>
        <position position="1"/>
    </location>
</feature>
<feature type="chain" id="PRO_0000248622" description="Putative alpha/beta hydrolase L404">
    <location>
        <begin position="2"/>
        <end position="263"/>
    </location>
</feature>
<feature type="lipid moiety-binding region" description="N-myristoyl glycine; by host" evidence="1">
    <location>
        <position position="2"/>
    </location>
</feature>
<gene>
    <name type="ordered locus">MIMI_L404</name>
</gene>
<dbReference type="EC" id="3.-.-.-"/>
<dbReference type="EMBL" id="AY653733">
    <property type="protein sequence ID" value="AAV50673.1"/>
    <property type="molecule type" value="Genomic_DNA"/>
</dbReference>
<dbReference type="SMR" id="Q5UQK4"/>
<dbReference type="ESTHER" id="mimiv-q5uqk4">
    <property type="family name" value="ABHD17-depalmitoylase"/>
</dbReference>
<dbReference type="KEGG" id="vg:9925025"/>
<dbReference type="OrthoDB" id="10705at10239"/>
<dbReference type="Proteomes" id="UP000001134">
    <property type="component" value="Genome"/>
</dbReference>
<dbReference type="GO" id="GO:0016787">
    <property type="term" value="F:hydrolase activity"/>
    <property type="evidence" value="ECO:0007669"/>
    <property type="project" value="UniProtKB-KW"/>
</dbReference>
<dbReference type="Gene3D" id="3.40.50.1820">
    <property type="entry name" value="alpha/beta hydrolase"/>
    <property type="match status" value="2"/>
</dbReference>
<dbReference type="InterPro" id="IPR029058">
    <property type="entry name" value="AB_hydrolase_fold"/>
</dbReference>
<dbReference type="InterPro" id="IPR022742">
    <property type="entry name" value="Hydrolase_4"/>
</dbReference>
<dbReference type="PANTHER" id="PTHR12277">
    <property type="entry name" value="ALPHA/BETA HYDROLASE DOMAIN-CONTAINING PROTEIN"/>
    <property type="match status" value="1"/>
</dbReference>
<dbReference type="PANTHER" id="PTHR12277:SF81">
    <property type="entry name" value="PROTEIN ABHD13"/>
    <property type="match status" value="1"/>
</dbReference>
<dbReference type="Pfam" id="PF12146">
    <property type="entry name" value="Hydrolase_4"/>
    <property type="match status" value="1"/>
</dbReference>
<dbReference type="SUPFAM" id="SSF53474">
    <property type="entry name" value="alpha/beta-Hydrolases"/>
    <property type="match status" value="1"/>
</dbReference>
<protein>
    <recommendedName>
        <fullName>Putative alpha/beta hydrolase L404</fullName>
        <ecNumber>3.-.-.-</ecNumber>
    </recommendedName>
</protein>